<organism>
    <name type="scientific">Arabidopsis thaliana</name>
    <name type="common">Mouse-ear cress</name>
    <dbReference type="NCBI Taxonomy" id="3702"/>
    <lineage>
        <taxon>Eukaryota</taxon>
        <taxon>Viridiplantae</taxon>
        <taxon>Streptophyta</taxon>
        <taxon>Embryophyta</taxon>
        <taxon>Tracheophyta</taxon>
        <taxon>Spermatophyta</taxon>
        <taxon>Magnoliopsida</taxon>
        <taxon>eudicotyledons</taxon>
        <taxon>Gunneridae</taxon>
        <taxon>Pentapetalae</taxon>
        <taxon>rosids</taxon>
        <taxon>malvids</taxon>
        <taxon>Brassicales</taxon>
        <taxon>Brassicaceae</taxon>
        <taxon>Camelineae</taxon>
        <taxon>Arabidopsis</taxon>
    </lineage>
</organism>
<gene>
    <name type="primary">HMGCL</name>
    <name type="ordered locus">At2g26800</name>
    <name type="ORF">F12C20.16</name>
</gene>
<feature type="chain" id="PRO_0000389611" description="Hydroxymethylglutaryl-CoA lyase, mitochondrial">
    <location>
        <begin position="1"/>
        <end position="468"/>
    </location>
</feature>
<feature type="domain" description="Pyruvate carboxyltransferase" evidence="2">
    <location>
        <begin position="168"/>
        <end position="435"/>
    </location>
</feature>
<feature type="active site" evidence="1">
    <location>
        <position position="401"/>
    </location>
</feature>
<feature type="binding site" evidence="1">
    <location>
        <position position="176"/>
    </location>
    <ligand>
        <name>substrate</name>
    </ligand>
</feature>
<feature type="binding site" evidence="1">
    <location>
        <position position="177"/>
    </location>
    <ligand>
        <name>a divalent metal cation</name>
        <dbReference type="ChEBI" id="CHEBI:60240"/>
    </ligand>
</feature>
<feature type="binding site" evidence="1">
    <location>
        <position position="368"/>
    </location>
    <ligand>
        <name>a divalent metal cation</name>
        <dbReference type="ChEBI" id="CHEBI:60240"/>
    </ligand>
</feature>
<feature type="binding site" evidence="1">
    <location>
        <position position="370"/>
    </location>
    <ligand>
        <name>a divalent metal cation</name>
        <dbReference type="ChEBI" id="CHEBI:60240"/>
    </ligand>
</feature>
<feature type="binding site" evidence="1">
    <location>
        <position position="410"/>
    </location>
    <ligand>
        <name>a divalent metal cation</name>
        <dbReference type="ChEBI" id="CHEBI:60240"/>
    </ligand>
</feature>
<feature type="splice variant" id="VSP_038469" description="In isoform 2." evidence="4">
    <location>
        <begin position="1"/>
        <end position="35"/>
    </location>
</feature>
<reference key="1">
    <citation type="journal article" date="1999" name="Nature">
        <title>Sequence and analysis of chromosome 2 of the plant Arabidopsis thaliana.</title>
        <authorList>
            <person name="Lin X."/>
            <person name="Kaul S."/>
            <person name="Rounsley S.D."/>
            <person name="Shea T.P."/>
            <person name="Benito M.-I."/>
            <person name="Town C.D."/>
            <person name="Fujii C.Y."/>
            <person name="Mason T.M."/>
            <person name="Bowman C.L."/>
            <person name="Barnstead M.E."/>
            <person name="Feldblyum T.V."/>
            <person name="Buell C.R."/>
            <person name="Ketchum K.A."/>
            <person name="Lee J.J."/>
            <person name="Ronning C.M."/>
            <person name="Koo H.L."/>
            <person name="Moffat K.S."/>
            <person name="Cronin L.A."/>
            <person name="Shen M."/>
            <person name="Pai G."/>
            <person name="Van Aken S."/>
            <person name="Umayam L."/>
            <person name="Tallon L.J."/>
            <person name="Gill J.E."/>
            <person name="Adams M.D."/>
            <person name="Carrera A.J."/>
            <person name="Creasy T.H."/>
            <person name="Goodman H.M."/>
            <person name="Somerville C.R."/>
            <person name="Copenhaver G.P."/>
            <person name="Preuss D."/>
            <person name="Nierman W.C."/>
            <person name="White O."/>
            <person name="Eisen J.A."/>
            <person name="Salzberg S.L."/>
            <person name="Fraser C.M."/>
            <person name="Venter J.C."/>
        </authorList>
    </citation>
    <scope>NUCLEOTIDE SEQUENCE [LARGE SCALE GENOMIC DNA]</scope>
    <source>
        <strain>cv. Columbia</strain>
    </source>
</reference>
<reference key="2">
    <citation type="journal article" date="2017" name="Plant J.">
        <title>Araport11: a complete reannotation of the Arabidopsis thaliana reference genome.</title>
        <authorList>
            <person name="Cheng C.Y."/>
            <person name="Krishnakumar V."/>
            <person name="Chan A.P."/>
            <person name="Thibaud-Nissen F."/>
            <person name="Schobel S."/>
            <person name="Town C.D."/>
        </authorList>
    </citation>
    <scope>GENOME REANNOTATION</scope>
    <source>
        <strain>cv. Columbia</strain>
    </source>
</reference>
<reference key="3">
    <citation type="journal article" date="2003" name="Science">
        <title>Empirical analysis of transcriptional activity in the Arabidopsis genome.</title>
        <authorList>
            <person name="Yamada K."/>
            <person name="Lim J."/>
            <person name="Dale J.M."/>
            <person name="Chen H."/>
            <person name="Shinn P."/>
            <person name="Palm C.J."/>
            <person name="Southwick A.M."/>
            <person name="Wu H.C."/>
            <person name="Kim C.J."/>
            <person name="Nguyen M."/>
            <person name="Pham P.K."/>
            <person name="Cheuk R.F."/>
            <person name="Karlin-Newmann G."/>
            <person name="Liu S.X."/>
            <person name="Lam B."/>
            <person name="Sakano H."/>
            <person name="Wu T."/>
            <person name="Yu G."/>
            <person name="Miranda M."/>
            <person name="Quach H.L."/>
            <person name="Tripp M."/>
            <person name="Chang C.H."/>
            <person name="Lee J.M."/>
            <person name="Toriumi M.J."/>
            <person name="Chan M.M."/>
            <person name="Tang C.C."/>
            <person name="Onodera C.S."/>
            <person name="Deng J.M."/>
            <person name="Akiyama K."/>
            <person name="Ansari Y."/>
            <person name="Arakawa T."/>
            <person name="Banh J."/>
            <person name="Banno F."/>
            <person name="Bowser L."/>
            <person name="Brooks S.Y."/>
            <person name="Carninci P."/>
            <person name="Chao Q."/>
            <person name="Choy N."/>
            <person name="Enju A."/>
            <person name="Goldsmith A.D."/>
            <person name="Gurjal M."/>
            <person name="Hansen N.F."/>
            <person name="Hayashizaki Y."/>
            <person name="Johnson-Hopson C."/>
            <person name="Hsuan V.W."/>
            <person name="Iida K."/>
            <person name="Karnes M."/>
            <person name="Khan S."/>
            <person name="Koesema E."/>
            <person name="Ishida J."/>
            <person name="Jiang P.X."/>
            <person name="Jones T."/>
            <person name="Kawai J."/>
            <person name="Kamiya A."/>
            <person name="Meyers C."/>
            <person name="Nakajima M."/>
            <person name="Narusaka M."/>
            <person name="Seki M."/>
            <person name="Sakurai T."/>
            <person name="Satou M."/>
            <person name="Tamse R."/>
            <person name="Vaysberg M."/>
            <person name="Wallender E.K."/>
            <person name="Wong C."/>
            <person name="Yamamura Y."/>
            <person name="Yuan S."/>
            <person name="Shinozaki K."/>
            <person name="Davis R.W."/>
            <person name="Theologis A."/>
            <person name="Ecker J.R."/>
        </authorList>
    </citation>
    <scope>NUCLEOTIDE SEQUENCE [LARGE SCALE MRNA] (ISOFORMS 1 AND 2)</scope>
    <source>
        <strain>cv. Columbia</strain>
    </source>
</reference>
<reference key="4">
    <citation type="journal article" date="2004" name="Plant Physiol.">
        <title>Lipoic acid-dependent oxidative catabolism of alpha-keto acids in mitochondria provides evidence for branched-chain amino acid catabolism in Arabidopsis.</title>
        <authorList>
            <person name="Taylor N.L."/>
            <person name="Heazlewood J.L."/>
            <person name="Day D.A."/>
            <person name="Millar A.H."/>
        </authorList>
    </citation>
    <scope>IDENTIFICATION BY MASS SPECTROMETRY</scope>
    <scope>SUBCELLULAR LOCATION</scope>
</reference>
<name>HMGCL_ARATH</name>
<sequence length="468" mass="50577">MQWNGVRRAHSIWCKRLTNNTHLHHPSIPVSHFFTMSSLEEPLSFDKLPSMSTMDRIQRFSSGACRPRDDVGMGHRWIEGRDCTTSNSCIDDDKSFAKESFPWRRHTRKLSEGEHMFRNISFAGRTSTVSGTLRESKSFKEQKYSTFSNENGTSHISNKISKGIPKFVKIVEVGPRDGLQNEKNIVPTSVKVELIQRLVSSGLPVVEATSFVSPKWVPQLADAKDVMDAVNTLDGARLPVLTPNLKGFQAAVSAGAKEVAIFASASESFSLSNINCTIEESLLRYRVVATAAKEHSVPVRGYVSCVVGCPVEGPVLPSKVAYVVKELYDMGCFEISLGDTIGIGTPGSVVPMLEAVMAVVPADKLAVHFHDTYGQALANILVSLQMGISIVDSSIAGLGGCPYAKGASGNVATEDVVYMLNGLGVHTNVDLGKLIAAGDFISKHLGRPNGSKAAVALNRRITADASKI</sequence>
<evidence type="ECO:0000250" key="1"/>
<evidence type="ECO:0000255" key="2">
    <source>
        <dbReference type="PROSITE-ProRule" id="PRU01151"/>
    </source>
</evidence>
<evidence type="ECO:0000269" key="3">
    <source>
    </source>
</evidence>
<evidence type="ECO:0000303" key="4">
    <source>
    </source>
</evidence>
<evidence type="ECO:0000305" key="5"/>
<accession>O81027</accession>
<accession>Q8L7K2</accession>
<accession>Q9FPE2</accession>
<keyword id="KW-0025">Alternative splicing</keyword>
<keyword id="KW-0456">Lyase</keyword>
<keyword id="KW-0479">Metal-binding</keyword>
<keyword id="KW-0496">Mitochondrion</keyword>
<keyword id="KW-1185">Reference proteome</keyword>
<comment type="function">
    <text evidence="5">Involved in the catabolism of branched amino acids such as leucine.</text>
</comment>
<comment type="catalytic activity">
    <reaction>
        <text>(3S)-3-hydroxy-3-methylglutaryl-CoA = acetoacetate + acetyl-CoA</text>
        <dbReference type="Rhea" id="RHEA:24404"/>
        <dbReference type="ChEBI" id="CHEBI:13705"/>
        <dbReference type="ChEBI" id="CHEBI:43074"/>
        <dbReference type="ChEBI" id="CHEBI:57288"/>
        <dbReference type="EC" id="4.1.3.4"/>
    </reaction>
</comment>
<comment type="cofactor">
    <cofactor evidence="1">
        <name>a divalent metal cation</name>
        <dbReference type="ChEBI" id="CHEBI:60240"/>
    </cofactor>
</comment>
<comment type="pathway">
    <text>Metabolic intermediate metabolism; (S)-3-hydroxy-3-methylglutaryl-CoA degradation; acetoacetate from (S)-3-hydroxy-3-methylglutaryl-CoA: step 1/1.</text>
</comment>
<comment type="subunit">
    <text evidence="1">Homodimer.</text>
</comment>
<comment type="interaction">
    <interactant intactId="EBI-4434127">
        <id>O81027</id>
    </interactant>
    <interactant intactId="EBI-2349513">
        <id>Q84MC7</id>
        <label>PYL9</label>
    </interactant>
    <organismsDiffer>false</organismsDiffer>
    <experiments>3</experiments>
</comment>
<comment type="subcellular location">
    <subcellularLocation>
        <location evidence="3">Mitochondrion matrix</location>
    </subcellularLocation>
</comment>
<comment type="alternative products">
    <event type="alternative splicing"/>
    <isoform>
        <id>O81027-1</id>
        <name>1</name>
        <sequence type="displayed"/>
    </isoform>
    <isoform>
        <id>O81027-2</id>
        <name>2</name>
        <sequence type="described" ref="VSP_038469"/>
    </isoform>
</comment>
<comment type="similarity">
    <text evidence="5">Belongs to the HMG-CoA lyase family.</text>
</comment>
<dbReference type="EC" id="4.1.3.4"/>
<dbReference type="EMBL" id="AC005168">
    <property type="protein sequence ID" value="AAC32247.2"/>
    <property type="molecule type" value="Genomic_DNA"/>
</dbReference>
<dbReference type="EMBL" id="CP002685">
    <property type="protein sequence ID" value="AEC07888.1"/>
    <property type="molecule type" value="Genomic_DNA"/>
</dbReference>
<dbReference type="EMBL" id="CP002685">
    <property type="protein sequence ID" value="AEC07890.1"/>
    <property type="molecule type" value="Genomic_DNA"/>
</dbReference>
<dbReference type="EMBL" id="CP002685">
    <property type="protein sequence ID" value="ANM62277.1"/>
    <property type="molecule type" value="Genomic_DNA"/>
</dbReference>
<dbReference type="EMBL" id="AF327420">
    <property type="protein sequence ID" value="AAG42010.1"/>
    <property type="molecule type" value="mRNA"/>
</dbReference>
<dbReference type="EMBL" id="AF349521">
    <property type="protein sequence ID" value="AAK15568.1"/>
    <property type="molecule type" value="mRNA"/>
</dbReference>
<dbReference type="EMBL" id="AY128409">
    <property type="protein sequence ID" value="AAM91612.1"/>
    <property type="molecule type" value="mRNA"/>
</dbReference>
<dbReference type="EMBL" id="BT000081">
    <property type="protein sequence ID" value="AAN15400.1"/>
    <property type="molecule type" value="mRNA"/>
</dbReference>
<dbReference type="PIR" id="T02655">
    <property type="entry name" value="T02655"/>
</dbReference>
<dbReference type="RefSeq" id="NP_001324446.1">
    <molecule id="O81027-1"/>
    <property type="nucleotide sequence ID" value="NM_001336085.1"/>
</dbReference>
<dbReference type="RefSeq" id="NP_565629.1">
    <molecule id="O81027-1"/>
    <property type="nucleotide sequence ID" value="NM_128237.3"/>
</dbReference>
<dbReference type="RefSeq" id="NP_850087.1">
    <molecule id="O81027-2"/>
    <property type="nucleotide sequence ID" value="NM_179756.4"/>
</dbReference>
<dbReference type="SMR" id="O81027"/>
<dbReference type="BioGRID" id="2573">
    <property type="interactions" value="7"/>
</dbReference>
<dbReference type="FunCoup" id="O81027">
    <property type="interactions" value="2733"/>
</dbReference>
<dbReference type="IntAct" id="O81027">
    <property type="interactions" value="7"/>
</dbReference>
<dbReference type="STRING" id="3702.O81027"/>
<dbReference type="iPTMnet" id="O81027"/>
<dbReference type="PaxDb" id="3702-AT2G26800.2"/>
<dbReference type="EnsemblPlants" id="AT2G26800.1">
    <molecule id="O81027-2"/>
    <property type="protein sequence ID" value="AT2G26800.1"/>
    <property type="gene ID" value="AT2G26800"/>
</dbReference>
<dbReference type="EnsemblPlants" id="AT2G26800.2">
    <molecule id="O81027-1"/>
    <property type="protein sequence ID" value="AT2G26800.2"/>
    <property type="gene ID" value="AT2G26800"/>
</dbReference>
<dbReference type="EnsemblPlants" id="AT2G26800.4">
    <molecule id="O81027-1"/>
    <property type="protein sequence ID" value="AT2G26800.4"/>
    <property type="gene ID" value="AT2G26800"/>
</dbReference>
<dbReference type="GeneID" id="817221"/>
<dbReference type="Gramene" id="AT2G26800.1">
    <molecule id="O81027-2"/>
    <property type="protein sequence ID" value="AT2G26800.1"/>
    <property type="gene ID" value="AT2G26800"/>
</dbReference>
<dbReference type="Gramene" id="AT2G26800.2">
    <molecule id="O81027-1"/>
    <property type="protein sequence ID" value="AT2G26800.2"/>
    <property type="gene ID" value="AT2G26800"/>
</dbReference>
<dbReference type="Gramene" id="AT2G26800.4">
    <molecule id="O81027-1"/>
    <property type="protein sequence ID" value="AT2G26800.4"/>
    <property type="gene ID" value="AT2G26800"/>
</dbReference>
<dbReference type="KEGG" id="ath:AT2G26800"/>
<dbReference type="Araport" id="AT2G26800"/>
<dbReference type="TAIR" id="AT2G26800">
    <property type="gene designation" value="HGML"/>
</dbReference>
<dbReference type="eggNOG" id="KOG2368">
    <property type="taxonomic scope" value="Eukaryota"/>
</dbReference>
<dbReference type="InParanoid" id="O81027"/>
<dbReference type="PhylomeDB" id="O81027"/>
<dbReference type="BioCyc" id="ARA:AT2G26800-MONOMER"/>
<dbReference type="UniPathway" id="UPA00896">
    <property type="reaction ID" value="UER00863"/>
</dbReference>
<dbReference type="PRO" id="PR:O81027"/>
<dbReference type="Proteomes" id="UP000006548">
    <property type="component" value="Chromosome 2"/>
</dbReference>
<dbReference type="ExpressionAtlas" id="O81027">
    <property type="expression patterns" value="baseline and differential"/>
</dbReference>
<dbReference type="GO" id="GO:0005759">
    <property type="term" value="C:mitochondrial matrix"/>
    <property type="evidence" value="ECO:0007669"/>
    <property type="project" value="UniProtKB-SubCell"/>
</dbReference>
<dbReference type="GO" id="GO:0005739">
    <property type="term" value="C:mitochondrion"/>
    <property type="evidence" value="ECO:0000314"/>
    <property type="project" value="TAIR"/>
</dbReference>
<dbReference type="GO" id="GO:0004419">
    <property type="term" value="F:hydroxymethylglutaryl-CoA lyase activity"/>
    <property type="evidence" value="ECO:0000314"/>
    <property type="project" value="TAIR"/>
</dbReference>
<dbReference type="GO" id="GO:0046872">
    <property type="term" value="F:metal ion binding"/>
    <property type="evidence" value="ECO:0000250"/>
    <property type="project" value="UniProtKB"/>
</dbReference>
<dbReference type="CDD" id="cd07938">
    <property type="entry name" value="DRE_TIM_HMGL"/>
    <property type="match status" value="1"/>
</dbReference>
<dbReference type="FunFam" id="3.20.20.70:FF:000038">
    <property type="entry name" value="Hydroxymethylglutaryl-CoA lyase, mitochondrial"/>
    <property type="match status" value="1"/>
</dbReference>
<dbReference type="Gene3D" id="3.20.20.70">
    <property type="entry name" value="Aldolase class I"/>
    <property type="match status" value="1"/>
</dbReference>
<dbReference type="InterPro" id="IPR013785">
    <property type="entry name" value="Aldolase_TIM"/>
</dbReference>
<dbReference type="InterPro" id="IPR043594">
    <property type="entry name" value="HMGL"/>
</dbReference>
<dbReference type="InterPro" id="IPR000891">
    <property type="entry name" value="PYR_CT"/>
</dbReference>
<dbReference type="NCBIfam" id="NF004283">
    <property type="entry name" value="PRK05692.1"/>
    <property type="match status" value="1"/>
</dbReference>
<dbReference type="PANTHER" id="PTHR42738">
    <property type="entry name" value="HYDROXYMETHYLGLUTARYL-COA LYASE"/>
    <property type="match status" value="1"/>
</dbReference>
<dbReference type="PANTHER" id="PTHR42738:SF7">
    <property type="entry name" value="HYDROXYMETHYLGLUTARYL-COA LYASE"/>
    <property type="match status" value="1"/>
</dbReference>
<dbReference type="Pfam" id="PF00682">
    <property type="entry name" value="HMGL-like"/>
    <property type="match status" value="1"/>
</dbReference>
<dbReference type="SUPFAM" id="SSF51569">
    <property type="entry name" value="Aldolase"/>
    <property type="match status" value="1"/>
</dbReference>
<dbReference type="PROSITE" id="PS50991">
    <property type="entry name" value="PYR_CT"/>
    <property type="match status" value="1"/>
</dbReference>
<protein>
    <recommendedName>
        <fullName>Hydroxymethylglutaryl-CoA lyase, mitochondrial</fullName>
        <shortName>HL</shortName>
        <shortName>HMG-CoA lyase</shortName>
        <ecNumber>4.1.3.4</ecNumber>
    </recommendedName>
    <alternativeName>
        <fullName>3-hydroxy-3-methylglutarate-CoA lyase</fullName>
    </alternativeName>
</protein>
<proteinExistence type="evidence at protein level"/>